<protein>
    <recommendedName>
        <fullName evidence="1">Ribosomal RNA large subunit methyltransferase E</fullName>
        <ecNumber evidence="1">2.1.1.166</ecNumber>
    </recommendedName>
    <alternativeName>
        <fullName evidence="1">23S rRNA Um2552 methyltransferase</fullName>
    </alternativeName>
    <alternativeName>
        <fullName evidence="1">rRNA (uridine-2'-O-)-methyltransferase</fullName>
    </alternativeName>
</protein>
<feature type="chain" id="PRO_0000333318" description="Ribosomal RNA large subunit methyltransferase E">
    <location>
        <begin position="1"/>
        <end position="225"/>
    </location>
</feature>
<feature type="active site" description="Proton acceptor" evidence="1">
    <location>
        <position position="177"/>
    </location>
</feature>
<feature type="binding site" evidence="1">
    <location>
        <position position="79"/>
    </location>
    <ligand>
        <name>S-adenosyl-L-methionine</name>
        <dbReference type="ChEBI" id="CHEBI:59789"/>
    </ligand>
</feature>
<feature type="binding site" evidence="1">
    <location>
        <position position="81"/>
    </location>
    <ligand>
        <name>S-adenosyl-L-methionine</name>
        <dbReference type="ChEBI" id="CHEBI:59789"/>
    </ligand>
</feature>
<feature type="binding site" evidence="1">
    <location>
        <position position="97"/>
    </location>
    <ligand>
        <name>S-adenosyl-L-methionine</name>
        <dbReference type="ChEBI" id="CHEBI:59789"/>
    </ligand>
</feature>
<feature type="binding site" evidence="1">
    <location>
        <position position="113"/>
    </location>
    <ligand>
        <name>S-adenosyl-L-methionine</name>
        <dbReference type="ChEBI" id="CHEBI:59789"/>
    </ligand>
</feature>
<feature type="binding site" evidence="1">
    <location>
        <position position="137"/>
    </location>
    <ligand>
        <name>S-adenosyl-L-methionine</name>
        <dbReference type="ChEBI" id="CHEBI:59789"/>
    </ligand>
</feature>
<dbReference type="EC" id="2.1.1.166" evidence="1"/>
<dbReference type="EMBL" id="CP000697">
    <property type="protein sequence ID" value="ABQ31211.1"/>
    <property type="molecule type" value="Genomic_DNA"/>
</dbReference>
<dbReference type="RefSeq" id="WP_007424595.1">
    <property type="nucleotide sequence ID" value="NC_009484.1"/>
</dbReference>
<dbReference type="SMR" id="A5G029"/>
<dbReference type="STRING" id="349163.Acry_2011"/>
<dbReference type="KEGG" id="acr:Acry_2011"/>
<dbReference type="eggNOG" id="COG0293">
    <property type="taxonomic scope" value="Bacteria"/>
</dbReference>
<dbReference type="HOGENOM" id="CLU_009422_4_2_5"/>
<dbReference type="Proteomes" id="UP000000245">
    <property type="component" value="Chromosome"/>
</dbReference>
<dbReference type="GO" id="GO:0005737">
    <property type="term" value="C:cytoplasm"/>
    <property type="evidence" value="ECO:0007669"/>
    <property type="project" value="UniProtKB-SubCell"/>
</dbReference>
<dbReference type="GO" id="GO:0008650">
    <property type="term" value="F:rRNA (uridine-2'-O-)-methyltransferase activity"/>
    <property type="evidence" value="ECO:0007669"/>
    <property type="project" value="UniProtKB-UniRule"/>
</dbReference>
<dbReference type="Gene3D" id="3.40.50.150">
    <property type="entry name" value="Vaccinia Virus protein VP39"/>
    <property type="match status" value="1"/>
</dbReference>
<dbReference type="HAMAP" id="MF_01547">
    <property type="entry name" value="RNA_methyltr_E"/>
    <property type="match status" value="1"/>
</dbReference>
<dbReference type="InterPro" id="IPR050082">
    <property type="entry name" value="RNA_methyltr_RlmE"/>
</dbReference>
<dbReference type="InterPro" id="IPR002877">
    <property type="entry name" value="RNA_MeTrfase_FtsJ_dom"/>
</dbReference>
<dbReference type="InterPro" id="IPR015507">
    <property type="entry name" value="rRNA-MeTfrase_E"/>
</dbReference>
<dbReference type="InterPro" id="IPR029063">
    <property type="entry name" value="SAM-dependent_MTases_sf"/>
</dbReference>
<dbReference type="PANTHER" id="PTHR10920">
    <property type="entry name" value="RIBOSOMAL RNA METHYLTRANSFERASE"/>
    <property type="match status" value="1"/>
</dbReference>
<dbReference type="PANTHER" id="PTHR10920:SF18">
    <property type="entry name" value="RRNA METHYLTRANSFERASE 2, MITOCHONDRIAL"/>
    <property type="match status" value="1"/>
</dbReference>
<dbReference type="Pfam" id="PF01728">
    <property type="entry name" value="FtsJ"/>
    <property type="match status" value="1"/>
</dbReference>
<dbReference type="PIRSF" id="PIRSF005461">
    <property type="entry name" value="23S_rRNA_mtase"/>
    <property type="match status" value="1"/>
</dbReference>
<dbReference type="SUPFAM" id="SSF53335">
    <property type="entry name" value="S-adenosyl-L-methionine-dependent methyltransferases"/>
    <property type="match status" value="1"/>
</dbReference>
<comment type="function">
    <text evidence="1">Specifically methylates the uridine in position 2552 of 23S rRNA at the 2'-O position of the ribose in the fully assembled 50S ribosomal subunit.</text>
</comment>
<comment type="catalytic activity">
    <reaction evidence="1">
        <text>uridine(2552) in 23S rRNA + S-adenosyl-L-methionine = 2'-O-methyluridine(2552) in 23S rRNA + S-adenosyl-L-homocysteine + H(+)</text>
        <dbReference type="Rhea" id="RHEA:42720"/>
        <dbReference type="Rhea" id="RHEA-COMP:10202"/>
        <dbReference type="Rhea" id="RHEA-COMP:10203"/>
        <dbReference type="ChEBI" id="CHEBI:15378"/>
        <dbReference type="ChEBI" id="CHEBI:57856"/>
        <dbReference type="ChEBI" id="CHEBI:59789"/>
        <dbReference type="ChEBI" id="CHEBI:65315"/>
        <dbReference type="ChEBI" id="CHEBI:74478"/>
        <dbReference type="EC" id="2.1.1.166"/>
    </reaction>
</comment>
<comment type="subcellular location">
    <subcellularLocation>
        <location evidence="1">Cytoplasm</location>
    </subcellularLocation>
</comment>
<comment type="similarity">
    <text evidence="1">Belongs to the class I-like SAM-binding methyltransferase superfamily. RNA methyltransferase RlmE family.</text>
</comment>
<name>RLME_ACICJ</name>
<sequence length="225" mass="24378">MTEETIGSRRRAAVRLKAARKHKPSSQKWLLRQLNDPYVAAAKERGFRSRAAFKLIELDEKFGLIGKGARVVDLGAAPGGWTQVALERGASRVVGIDLLDIDPIAGATLIKGDFQDESMETALAEILGGPADVVMSDMAPNTTGHTATDHLRIMGLAELALDFAFKHLAPGGAFVTKLFQGGAQGDMLNLLKRRFAQVRHAKPEASRKDSRELYLVATGYRPDAS</sequence>
<keyword id="KW-0963">Cytoplasm</keyword>
<keyword id="KW-0489">Methyltransferase</keyword>
<keyword id="KW-1185">Reference proteome</keyword>
<keyword id="KW-0698">rRNA processing</keyword>
<keyword id="KW-0949">S-adenosyl-L-methionine</keyword>
<keyword id="KW-0808">Transferase</keyword>
<proteinExistence type="inferred from homology"/>
<evidence type="ECO:0000255" key="1">
    <source>
        <dbReference type="HAMAP-Rule" id="MF_01547"/>
    </source>
</evidence>
<gene>
    <name evidence="1" type="primary">rlmE</name>
    <name evidence="1" type="synonym">ftsJ</name>
    <name evidence="1" type="synonym">rrmJ</name>
    <name type="ordered locus">Acry_2011</name>
</gene>
<accession>A5G029</accession>
<reference key="1">
    <citation type="submission" date="2007-05" db="EMBL/GenBank/DDBJ databases">
        <title>Complete sequence of chromosome of Acidiphilium cryptum JF-5.</title>
        <authorList>
            <consortium name="US DOE Joint Genome Institute"/>
            <person name="Copeland A."/>
            <person name="Lucas S."/>
            <person name="Lapidus A."/>
            <person name="Barry K."/>
            <person name="Detter J.C."/>
            <person name="Glavina del Rio T."/>
            <person name="Hammon N."/>
            <person name="Israni S."/>
            <person name="Dalin E."/>
            <person name="Tice H."/>
            <person name="Pitluck S."/>
            <person name="Sims D."/>
            <person name="Brettin T."/>
            <person name="Bruce D."/>
            <person name="Han C."/>
            <person name="Schmutz J."/>
            <person name="Larimer F."/>
            <person name="Land M."/>
            <person name="Hauser L."/>
            <person name="Kyrpides N."/>
            <person name="Kim E."/>
            <person name="Magnuson T."/>
            <person name="Richardson P."/>
        </authorList>
    </citation>
    <scope>NUCLEOTIDE SEQUENCE [LARGE SCALE GENOMIC DNA]</scope>
    <source>
        <strain>JF-5</strain>
    </source>
</reference>
<organism>
    <name type="scientific">Acidiphilium cryptum (strain JF-5)</name>
    <dbReference type="NCBI Taxonomy" id="349163"/>
    <lineage>
        <taxon>Bacteria</taxon>
        <taxon>Pseudomonadati</taxon>
        <taxon>Pseudomonadota</taxon>
        <taxon>Alphaproteobacteria</taxon>
        <taxon>Acetobacterales</taxon>
        <taxon>Acidocellaceae</taxon>
        <taxon>Acidiphilium</taxon>
    </lineage>
</organism>